<sequence>MEDKNSVIVFKNVSFQYQSDASFTLKDVSFNIPKGQWTSIVGHNGSGKSTIAKLMIGIEKVKSGEIFYNNQAITDDNFEKLRKDIGIVFQNPDNQFVGSIVKYDVAFGLENHAVPYDEMHRRVSEALKQVDMLERADYEPNALSGGQKQRVAIASVLALNPSVIILDEATSMLDPDARQNLLDLVRKVKSEHNITIISITHDLSEAMEADHVIVMNKGTVYKEGTATEIFDNAEELTRIGLDLPFPIKINQMLGHQTSFLTYEGLVDQL</sequence>
<accession>Q5HDY6</accession>
<organism>
    <name type="scientific">Staphylococcus aureus (strain COL)</name>
    <dbReference type="NCBI Taxonomy" id="93062"/>
    <lineage>
        <taxon>Bacteria</taxon>
        <taxon>Bacillati</taxon>
        <taxon>Bacillota</taxon>
        <taxon>Bacilli</taxon>
        <taxon>Bacillales</taxon>
        <taxon>Staphylococcaceae</taxon>
        <taxon>Staphylococcus</taxon>
    </lineage>
</organism>
<name>ECFA1_STAAC</name>
<dbReference type="EC" id="7.-.-.-" evidence="1"/>
<dbReference type="EMBL" id="CP000046">
    <property type="protein sequence ID" value="AAW37086.1"/>
    <property type="molecule type" value="Genomic_DNA"/>
</dbReference>
<dbReference type="RefSeq" id="WP_000389662.1">
    <property type="nucleotide sequence ID" value="NZ_JBGOFO010000004.1"/>
</dbReference>
<dbReference type="SMR" id="Q5HDY6"/>
<dbReference type="KEGG" id="sac:SACOL2211"/>
<dbReference type="HOGENOM" id="CLU_000604_1_22_9"/>
<dbReference type="Proteomes" id="UP000000530">
    <property type="component" value="Chromosome"/>
</dbReference>
<dbReference type="GO" id="GO:0043190">
    <property type="term" value="C:ATP-binding cassette (ABC) transporter complex"/>
    <property type="evidence" value="ECO:0007669"/>
    <property type="project" value="TreeGrafter"/>
</dbReference>
<dbReference type="GO" id="GO:0005524">
    <property type="term" value="F:ATP binding"/>
    <property type="evidence" value="ECO:0007669"/>
    <property type="project" value="UniProtKB-KW"/>
</dbReference>
<dbReference type="GO" id="GO:0016887">
    <property type="term" value="F:ATP hydrolysis activity"/>
    <property type="evidence" value="ECO:0007669"/>
    <property type="project" value="InterPro"/>
</dbReference>
<dbReference type="GO" id="GO:0042626">
    <property type="term" value="F:ATPase-coupled transmembrane transporter activity"/>
    <property type="evidence" value="ECO:0007669"/>
    <property type="project" value="TreeGrafter"/>
</dbReference>
<dbReference type="CDD" id="cd03225">
    <property type="entry name" value="ABC_cobalt_CbiO_domain1"/>
    <property type="match status" value="1"/>
</dbReference>
<dbReference type="FunFam" id="3.40.50.300:FF:000224">
    <property type="entry name" value="Energy-coupling factor transporter ATP-binding protein EcfA"/>
    <property type="match status" value="1"/>
</dbReference>
<dbReference type="Gene3D" id="3.40.50.300">
    <property type="entry name" value="P-loop containing nucleotide triphosphate hydrolases"/>
    <property type="match status" value="1"/>
</dbReference>
<dbReference type="InterPro" id="IPR003593">
    <property type="entry name" value="AAA+_ATPase"/>
</dbReference>
<dbReference type="InterPro" id="IPR003439">
    <property type="entry name" value="ABC_transporter-like_ATP-bd"/>
</dbReference>
<dbReference type="InterPro" id="IPR017871">
    <property type="entry name" value="ABC_transporter-like_CS"/>
</dbReference>
<dbReference type="InterPro" id="IPR015856">
    <property type="entry name" value="ABC_transpr_CbiO/EcfA_su"/>
</dbReference>
<dbReference type="InterPro" id="IPR050095">
    <property type="entry name" value="ECF_ABC_transporter_ATP-bd"/>
</dbReference>
<dbReference type="InterPro" id="IPR030947">
    <property type="entry name" value="EcfA_1"/>
</dbReference>
<dbReference type="InterPro" id="IPR027417">
    <property type="entry name" value="P-loop_NTPase"/>
</dbReference>
<dbReference type="NCBIfam" id="TIGR04520">
    <property type="entry name" value="ECF_ATPase_1"/>
    <property type="match status" value="1"/>
</dbReference>
<dbReference type="NCBIfam" id="NF010167">
    <property type="entry name" value="PRK13648.1"/>
    <property type="match status" value="1"/>
</dbReference>
<dbReference type="PANTHER" id="PTHR43553:SF24">
    <property type="entry name" value="ENERGY-COUPLING FACTOR TRANSPORTER ATP-BINDING PROTEIN ECFA1"/>
    <property type="match status" value="1"/>
</dbReference>
<dbReference type="PANTHER" id="PTHR43553">
    <property type="entry name" value="HEAVY METAL TRANSPORTER"/>
    <property type="match status" value="1"/>
</dbReference>
<dbReference type="Pfam" id="PF00005">
    <property type="entry name" value="ABC_tran"/>
    <property type="match status" value="1"/>
</dbReference>
<dbReference type="SMART" id="SM00382">
    <property type="entry name" value="AAA"/>
    <property type="match status" value="1"/>
</dbReference>
<dbReference type="SUPFAM" id="SSF52540">
    <property type="entry name" value="P-loop containing nucleoside triphosphate hydrolases"/>
    <property type="match status" value="1"/>
</dbReference>
<dbReference type="PROSITE" id="PS00211">
    <property type="entry name" value="ABC_TRANSPORTER_1"/>
    <property type="match status" value="1"/>
</dbReference>
<dbReference type="PROSITE" id="PS50893">
    <property type="entry name" value="ABC_TRANSPORTER_2"/>
    <property type="match status" value="1"/>
</dbReference>
<dbReference type="PROSITE" id="PS51246">
    <property type="entry name" value="CBIO"/>
    <property type="match status" value="1"/>
</dbReference>
<keyword id="KW-0067">ATP-binding</keyword>
<keyword id="KW-1003">Cell membrane</keyword>
<keyword id="KW-0472">Membrane</keyword>
<keyword id="KW-0547">Nucleotide-binding</keyword>
<keyword id="KW-1278">Translocase</keyword>
<keyword id="KW-0813">Transport</keyword>
<gene>
    <name evidence="1" type="primary">ecfA1</name>
    <name type="synonym">cbiO1</name>
    <name type="ordered locus">SACOL2211</name>
</gene>
<reference key="1">
    <citation type="journal article" date="2005" name="J. Bacteriol.">
        <title>Insights on evolution of virulence and resistance from the complete genome analysis of an early methicillin-resistant Staphylococcus aureus strain and a biofilm-producing methicillin-resistant Staphylococcus epidermidis strain.</title>
        <authorList>
            <person name="Gill S.R."/>
            <person name="Fouts D.E."/>
            <person name="Archer G.L."/>
            <person name="Mongodin E.F."/>
            <person name="DeBoy R.T."/>
            <person name="Ravel J."/>
            <person name="Paulsen I.T."/>
            <person name="Kolonay J.F."/>
            <person name="Brinkac L.M."/>
            <person name="Beanan M.J."/>
            <person name="Dodson R.J."/>
            <person name="Daugherty S.C."/>
            <person name="Madupu R."/>
            <person name="Angiuoli S.V."/>
            <person name="Durkin A.S."/>
            <person name="Haft D.H."/>
            <person name="Vamathevan J.J."/>
            <person name="Khouri H."/>
            <person name="Utterback T.R."/>
            <person name="Lee C."/>
            <person name="Dimitrov G."/>
            <person name="Jiang L."/>
            <person name="Qin H."/>
            <person name="Weidman J."/>
            <person name="Tran K."/>
            <person name="Kang K.H."/>
            <person name="Hance I.R."/>
            <person name="Nelson K.E."/>
            <person name="Fraser C.M."/>
        </authorList>
    </citation>
    <scope>NUCLEOTIDE SEQUENCE [LARGE SCALE GENOMIC DNA]</scope>
    <source>
        <strain>COL</strain>
    </source>
</reference>
<feature type="chain" id="PRO_0000092063" description="Energy-coupling factor transporter ATP-binding protein EcfA1">
    <location>
        <begin position="1"/>
        <end position="269"/>
    </location>
</feature>
<feature type="domain" description="ABC transporter" evidence="1">
    <location>
        <begin position="8"/>
        <end position="242"/>
    </location>
</feature>
<feature type="binding site" evidence="1">
    <location>
        <begin position="42"/>
        <end position="49"/>
    </location>
    <ligand>
        <name>ATP</name>
        <dbReference type="ChEBI" id="CHEBI:30616"/>
    </ligand>
</feature>
<evidence type="ECO:0000255" key="1">
    <source>
        <dbReference type="HAMAP-Rule" id="MF_01710"/>
    </source>
</evidence>
<proteinExistence type="inferred from homology"/>
<comment type="function">
    <text evidence="1">ATP-binding (A) component of a common energy-coupling factor (ECF) ABC-transporter complex. Unlike classic ABC transporters this ECF transporter provides the energy necessary to transport a number of different substrates.</text>
</comment>
<comment type="subunit">
    <text evidence="1">Forms a stable energy-coupling factor (ECF) transporter complex composed of 2 membrane-embedded substrate-binding proteins (S component), 2 ATP-binding proteins (A component) and 2 transmembrane proteins (T component).</text>
</comment>
<comment type="subcellular location">
    <subcellularLocation>
        <location evidence="1">Cell membrane</location>
        <topology evidence="1">Peripheral membrane protein</topology>
    </subcellularLocation>
</comment>
<comment type="similarity">
    <text evidence="1">Belongs to the ABC transporter superfamily. Energy-coupling factor EcfA family.</text>
</comment>
<protein>
    <recommendedName>
        <fullName evidence="1">Energy-coupling factor transporter ATP-binding protein EcfA1</fullName>
        <shortName evidence="1">ECF transporter A component EcfA1</shortName>
        <ecNumber evidence="1">7.-.-.-</ecNumber>
    </recommendedName>
</protein>